<keyword id="KW-0963">Cytoplasm</keyword>
<keyword id="KW-0255">Endonuclease</keyword>
<keyword id="KW-0378">Hydrolase</keyword>
<keyword id="KW-0460">Magnesium</keyword>
<keyword id="KW-0479">Metal-binding</keyword>
<keyword id="KW-0507">mRNA processing</keyword>
<keyword id="KW-0540">Nuclease</keyword>
<keyword id="KW-0694">RNA-binding</keyword>
<keyword id="KW-0698">rRNA processing</keyword>
<keyword id="KW-0699">rRNA-binding</keyword>
<keyword id="KW-0819">tRNA processing</keyword>
<proteinExistence type="inferred from homology"/>
<protein>
    <recommendedName>
        <fullName evidence="1">Ribonuclease 3</fullName>
        <ecNumber evidence="1">3.1.26.3</ecNumber>
    </recommendedName>
    <alternativeName>
        <fullName evidence="1">Ribonuclease III</fullName>
        <shortName evidence="1">RNase III</shortName>
    </alternativeName>
</protein>
<organism>
    <name type="scientific">Bacillus cereus (strain AH820)</name>
    <dbReference type="NCBI Taxonomy" id="405535"/>
    <lineage>
        <taxon>Bacteria</taxon>
        <taxon>Bacillati</taxon>
        <taxon>Bacillota</taxon>
        <taxon>Bacilli</taxon>
        <taxon>Bacillales</taxon>
        <taxon>Bacillaceae</taxon>
        <taxon>Bacillus</taxon>
        <taxon>Bacillus cereus group</taxon>
    </lineage>
</organism>
<accession>B7JJT6</accession>
<dbReference type="EC" id="3.1.26.3" evidence="1"/>
<dbReference type="EMBL" id="CP001283">
    <property type="protein sequence ID" value="ACK91824.1"/>
    <property type="molecule type" value="Genomic_DNA"/>
</dbReference>
<dbReference type="SMR" id="B7JJT6"/>
<dbReference type="KEGG" id="bcu:BCAH820_3863"/>
<dbReference type="HOGENOM" id="CLU_000907_1_3_9"/>
<dbReference type="Proteomes" id="UP000001363">
    <property type="component" value="Chromosome"/>
</dbReference>
<dbReference type="GO" id="GO:0005737">
    <property type="term" value="C:cytoplasm"/>
    <property type="evidence" value="ECO:0007669"/>
    <property type="project" value="UniProtKB-SubCell"/>
</dbReference>
<dbReference type="GO" id="GO:0003725">
    <property type="term" value="F:double-stranded RNA binding"/>
    <property type="evidence" value="ECO:0007669"/>
    <property type="project" value="TreeGrafter"/>
</dbReference>
<dbReference type="GO" id="GO:0046872">
    <property type="term" value="F:metal ion binding"/>
    <property type="evidence" value="ECO:0007669"/>
    <property type="project" value="UniProtKB-KW"/>
</dbReference>
<dbReference type="GO" id="GO:0004525">
    <property type="term" value="F:ribonuclease III activity"/>
    <property type="evidence" value="ECO:0007669"/>
    <property type="project" value="UniProtKB-UniRule"/>
</dbReference>
<dbReference type="GO" id="GO:0019843">
    <property type="term" value="F:rRNA binding"/>
    <property type="evidence" value="ECO:0007669"/>
    <property type="project" value="UniProtKB-KW"/>
</dbReference>
<dbReference type="GO" id="GO:0006397">
    <property type="term" value="P:mRNA processing"/>
    <property type="evidence" value="ECO:0007669"/>
    <property type="project" value="UniProtKB-UniRule"/>
</dbReference>
<dbReference type="GO" id="GO:0010468">
    <property type="term" value="P:regulation of gene expression"/>
    <property type="evidence" value="ECO:0007669"/>
    <property type="project" value="TreeGrafter"/>
</dbReference>
<dbReference type="GO" id="GO:0006364">
    <property type="term" value="P:rRNA processing"/>
    <property type="evidence" value="ECO:0007669"/>
    <property type="project" value="UniProtKB-UniRule"/>
</dbReference>
<dbReference type="GO" id="GO:0008033">
    <property type="term" value="P:tRNA processing"/>
    <property type="evidence" value="ECO:0007669"/>
    <property type="project" value="UniProtKB-KW"/>
</dbReference>
<dbReference type="CDD" id="cd10845">
    <property type="entry name" value="DSRM_RNAse_III_family"/>
    <property type="match status" value="1"/>
</dbReference>
<dbReference type="CDD" id="cd00593">
    <property type="entry name" value="RIBOc"/>
    <property type="match status" value="1"/>
</dbReference>
<dbReference type="FunFam" id="1.10.1520.10:FF:000001">
    <property type="entry name" value="Ribonuclease 3"/>
    <property type="match status" value="1"/>
</dbReference>
<dbReference type="FunFam" id="3.30.160.20:FF:000003">
    <property type="entry name" value="Ribonuclease 3"/>
    <property type="match status" value="1"/>
</dbReference>
<dbReference type="Gene3D" id="3.30.160.20">
    <property type="match status" value="1"/>
</dbReference>
<dbReference type="Gene3D" id="1.10.1520.10">
    <property type="entry name" value="Ribonuclease III domain"/>
    <property type="match status" value="1"/>
</dbReference>
<dbReference type="HAMAP" id="MF_00104">
    <property type="entry name" value="RNase_III"/>
    <property type="match status" value="1"/>
</dbReference>
<dbReference type="InterPro" id="IPR014720">
    <property type="entry name" value="dsRBD_dom"/>
</dbReference>
<dbReference type="InterPro" id="IPR011907">
    <property type="entry name" value="RNase_III"/>
</dbReference>
<dbReference type="InterPro" id="IPR000999">
    <property type="entry name" value="RNase_III_dom"/>
</dbReference>
<dbReference type="InterPro" id="IPR036389">
    <property type="entry name" value="RNase_III_sf"/>
</dbReference>
<dbReference type="NCBIfam" id="TIGR02191">
    <property type="entry name" value="RNaseIII"/>
    <property type="match status" value="1"/>
</dbReference>
<dbReference type="PANTHER" id="PTHR11207:SF0">
    <property type="entry name" value="RIBONUCLEASE 3"/>
    <property type="match status" value="1"/>
</dbReference>
<dbReference type="PANTHER" id="PTHR11207">
    <property type="entry name" value="RIBONUCLEASE III"/>
    <property type="match status" value="1"/>
</dbReference>
<dbReference type="Pfam" id="PF00035">
    <property type="entry name" value="dsrm"/>
    <property type="match status" value="1"/>
</dbReference>
<dbReference type="Pfam" id="PF14622">
    <property type="entry name" value="Ribonucleas_3_3"/>
    <property type="match status" value="1"/>
</dbReference>
<dbReference type="SMART" id="SM00358">
    <property type="entry name" value="DSRM"/>
    <property type="match status" value="1"/>
</dbReference>
<dbReference type="SMART" id="SM00535">
    <property type="entry name" value="RIBOc"/>
    <property type="match status" value="1"/>
</dbReference>
<dbReference type="SUPFAM" id="SSF54768">
    <property type="entry name" value="dsRNA-binding domain-like"/>
    <property type="match status" value="1"/>
</dbReference>
<dbReference type="SUPFAM" id="SSF69065">
    <property type="entry name" value="RNase III domain-like"/>
    <property type="match status" value="1"/>
</dbReference>
<dbReference type="PROSITE" id="PS50137">
    <property type="entry name" value="DS_RBD"/>
    <property type="match status" value="1"/>
</dbReference>
<dbReference type="PROSITE" id="PS00517">
    <property type="entry name" value="RNASE_3_1"/>
    <property type="match status" value="1"/>
</dbReference>
<dbReference type="PROSITE" id="PS50142">
    <property type="entry name" value="RNASE_3_2"/>
    <property type="match status" value="1"/>
</dbReference>
<gene>
    <name evidence="1" type="primary">rnc</name>
    <name type="ordered locus">BCAH820_3863</name>
</gene>
<feature type="chain" id="PRO_1000194409" description="Ribonuclease 3">
    <location>
        <begin position="1"/>
        <end position="245"/>
    </location>
</feature>
<feature type="domain" description="RNase III" evidence="1">
    <location>
        <begin position="19"/>
        <end position="148"/>
    </location>
</feature>
<feature type="domain" description="DRBM" evidence="1">
    <location>
        <begin position="174"/>
        <end position="243"/>
    </location>
</feature>
<feature type="active site" evidence="1">
    <location>
        <position position="65"/>
    </location>
</feature>
<feature type="active site" evidence="1">
    <location>
        <position position="137"/>
    </location>
</feature>
<feature type="binding site" evidence="1">
    <location>
        <position position="61"/>
    </location>
    <ligand>
        <name>Mg(2+)</name>
        <dbReference type="ChEBI" id="CHEBI:18420"/>
    </ligand>
</feature>
<feature type="binding site" evidence="1">
    <location>
        <position position="134"/>
    </location>
    <ligand>
        <name>Mg(2+)</name>
        <dbReference type="ChEBI" id="CHEBI:18420"/>
    </ligand>
</feature>
<feature type="binding site" evidence="1">
    <location>
        <position position="137"/>
    </location>
    <ligand>
        <name>Mg(2+)</name>
        <dbReference type="ChEBI" id="CHEBI:18420"/>
    </ligand>
</feature>
<name>RNC_BACC0</name>
<evidence type="ECO:0000255" key="1">
    <source>
        <dbReference type="HAMAP-Rule" id="MF_00104"/>
    </source>
</evidence>
<sequence>MPYRKYREKKYETKYREAFKLFQEKIGITFTDEKLLIQAFTHSSYVNEHRKKPHEDNERLEFLGDAVLELTVSQYLFQKYPTMSEGELTKLRAAIVCEPSLVRFANELSFGSLVLLGKGEEMTGGRERPALLADVFEAFIGALYLDQGLETVWGFLKEIVYPKINEGAFSHVMDYKSQLQELIQRDGSGNIEYQILQEKGPAHNREFVSRVTLNNVALGLGSGKSKKEAEQQAAAEALKKLKEQL</sequence>
<reference key="1">
    <citation type="submission" date="2008-10" db="EMBL/GenBank/DDBJ databases">
        <title>Genome sequence of Bacillus cereus AH820.</title>
        <authorList>
            <person name="Dodson R.J."/>
            <person name="Durkin A.S."/>
            <person name="Rosovitz M.J."/>
            <person name="Rasko D.A."/>
            <person name="Hoffmaster A."/>
            <person name="Ravel J."/>
            <person name="Sutton G."/>
        </authorList>
    </citation>
    <scope>NUCLEOTIDE SEQUENCE [LARGE SCALE GENOMIC DNA]</scope>
    <source>
        <strain>AH820</strain>
    </source>
</reference>
<comment type="function">
    <text evidence="1">Digests double-stranded RNA. Involved in the processing of primary rRNA transcript to yield the immediate precursors to the large and small rRNAs (23S and 16S). Processes some mRNAs, and tRNAs when they are encoded in the rRNA operon. Processes pre-crRNA and tracrRNA of type II CRISPR loci if present in the organism.</text>
</comment>
<comment type="catalytic activity">
    <reaction evidence="1">
        <text>Endonucleolytic cleavage to 5'-phosphomonoester.</text>
        <dbReference type="EC" id="3.1.26.3"/>
    </reaction>
</comment>
<comment type="cofactor">
    <cofactor evidence="1">
        <name>Mg(2+)</name>
        <dbReference type="ChEBI" id="CHEBI:18420"/>
    </cofactor>
</comment>
<comment type="subunit">
    <text evidence="1">Homodimer.</text>
</comment>
<comment type="subcellular location">
    <subcellularLocation>
        <location evidence="1">Cytoplasm</location>
    </subcellularLocation>
</comment>
<comment type="similarity">
    <text evidence="1">Belongs to the ribonuclease III family.</text>
</comment>